<dbReference type="EMBL" id="AE014134">
    <property type="protein sequence ID" value="AAF50969.1"/>
    <property type="molecule type" value="Genomic_DNA"/>
</dbReference>
<dbReference type="EMBL" id="BT150242">
    <property type="protein sequence ID" value="AGV77144.1"/>
    <property type="molecule type" value="mRNA"/>
</dbReference>
<dbReference type="RefSeq" id="NP_608868.1">
    <property type="nucleotide sequence ID" value="NM_135024.2"/>
</dbReference>
<dbReference type="PDB" id="8C7G">
    <property type="method" value="EM"/>
    <property type="resolution" value="3.20 A"/>
    <property type="chains" value="C=101-528"/>
</dbReference>
<dbReference type="PDB" id="8JBE">
    <property type="method" value="EM"/>
    <property type="resolution" value="3.25 A"/>
    <property type="chains" value="C=1-528"/>
</dbReference>
<dbReference type="PDBsum" id="8C7G"/>
<dbReference type="PDBsum" id="8JBE"/>
<dbReference type="EMDB" id="EMD-16457"/>
<dbReference type="EMDB" id="EMD-36143"/>
<dbReference type="SMR" id="Q9VR38"/>
<dbReference type="ComplexPortal" id="CPX-2331">
    <property type="entry name" value="MON1-CCZ1 guanyl-nucleotide exchange factor complex"/>
</dbReference>
<dbReference type="FunCoup" id="Q9VR38">
    <property type="interactions" value="772"/>
</dbReference>
<dbReference type="IntAct" id="Q9VR38">
    <property type="interactions" value="2"/>
</dbReference>
<dbReference type="STRING" id="7227.FBpp0077079"/>
<dbReference type="PaxDb" id="7227-FBpp0077079"/>
<dbReference type="DNASU" id="33689"/>
<dbReference type="EnsemblMetazoa" id="FBtr0077387">
    <property type="protein sequence ID" value="FBpp0077079"/>
    <property type="gene ID" value="FBgn0031640"/>
</dbReference>
<dbReference type="GeneID" id="33689"/>
<dbReference type="KEGG" id="dme:Dmel_CG11926"/>
<dbReference type="UCSC" id="CG11926-RA">
    <property type="organism name" value="d. melanogaster"/>
</dbReference>
<dbReference type="AGR" id="FB:FBgn0031640"/>
<dbReference type="CTD" id="33689"/>
<dbReference type="FlyBase" id="FBgn0031640">
    <property type="gene designation" value="Mon1"/>
</dbReference>
<dbReference type="VEuPathDB" id="VectorBase:FBgn0031640"/>
<dbReference type="eggNOG" id="KOG0997">
    <property type="taxonomic scope" value="Eukaryota"/>
</dbReference>
<dbReference type="GeneTree" id="ENSGT00390000006665"/>
<dbReference type="HOGENOM" id="CLU_014574_1_0_1"/>
<dbReference type="InParanoid" id="Q9VR38"/>
<dbReference type="OMA" id="QQPFNAK"/>
<dbReference type="OrthoDB" id="272411at2759"/>
<dbReference type="Reactome" id="R-DME-8876198">
    <property type="pathway name" value="RAB GEFs exchange GTP for GDP on RABs"/>
</dbReference>
<dbReference type="BioGRID-ORCS" id="33689">
    <property type="hits" value="0 hits in 3 CRISPR screens"/>
</dbReference>
<dbReference type="GenomeRNAi" id="33689"/>
<dbReference type="PRO" id="PR:Q9VR38"/>
<dbReference type="Proteomes" id="UP000000803">
    <property type="component" value="Chromosome 2L"/>
</dbReference>
<dbReference type="Bgee" id="FBgn0031640">
    <property type="expression patterns" value="Expressed in muscle cell in dorsal vessel heart and 30 other cell types or tissues"/>
</dbReference>
<dbReference type="ExpressionAtlas" id="Q9VR38">
    <property type="expression patterns" value="baseline and differential"/>
</dbReference>
<dbReference type="GO" id="GO:0005829">
    <property type="term" value="C:cytosol"/>
    <property type="evidence" value="ECO:0000314"/>
    <property type="project" value="FlyBase"/>
</dbReference>
<dbReference type="GO" id="GO:0035658">
    <property type="term" value="C:Mon1-Ccz1 complex"/>
    <property type="evidence" value="ECO:0000353"/>
    <property type="project" value="UniProtKB"/>
</dbReference>
<dbReference type="GO" id="GO:0043083">
    <property type="term" value="C:synaptic cleft"/>
    <property type="evidence" value="ECO:0000314"/>
    <property type="project" value="FlyBase"/>
</dbReference>
<dbReference type="GO" id="GO:1990624">
    <property type="term" value="F:guanyl nucleotide exchange factor inhibitor activity"/>
    <property type="evidence" value="ECO:0000314"/>
    <property type="project" value="UniProtKB"/>
</dbReference>
<dbReference type="GO" id="GO:0005085">
    <property type="term" value="F:guanyl-nucleotide exchange factor activity"/>
    <property type="evidence" value="ECO:0007669"/>
    <property type="project" value="UniProtKB-KW"/>
</dbReference>
<dbReference type="GO" id="GO:0008289">
    <property type="term" value="F:lipid binding"/>
    <property type="evidence" value="ECO:0007669"/>
    <property type="project" value="UniProtKB-KW"/>
</dbReference>
<dbReference type="GO" id="GO:0032510">
    <property type="term" value="P:endosome to lysosome transport via multivesicular body sorting pathway"/>
    <property type="evidence" value="ECO:0000315"/>
    <property type="project" value="FlyBase"/>
</dbReference>
<dbReference type="GO" id="GO:0007528">
    <property type="term" value="P:neuromuscular junction development"/>
    <property type="evidence" value="ECO:0000315"/>
    <property type="project" value="FlyBase"/>
</dbReference>
<dbReference type="GO" id="GO:0006623">
    <property type="term" value="P:protein targeting to vacuole"/>
    <property type="evidence" value="ECO:0007669"/>
    <property type="project" value="InterPro"/>
</dbReference>
<dbReference type="InterPro" id="IPR043972">
    <property type="entry name" value="FUZ/MON1/HPS1_longin_1"/>
</dbReference>
<dbReference type="InterPro" id="IPR043971">
    <property type="entry name" value="FUZ/MON1/HPS1_longin_2"/>
</dbReference>
<dbReference type="InterPro" id="IPR043970">
    <property type="entry name" value="FUZ/MON1/HPS1_longin_3"/>
</dbReference>
<dbReference type="InterPro" id="IPR004353">
    <property type="entry name" value="Mon1"/>
</dbReference>
<dbReference type="PANTHER" id="PTHR13027">
    <property type="entry name" value="SAND PROTEIN-RELATED"/>
    <property type="match status" value="1"/>
</dbReference>
<dbReference type="PANTHER" id="PTHR13027:SF7">
    <property type="entry name" value="VACUOLAR FUSION PROTEIN MON1 HOMOLOG"/>
    <property type="match status" value="1"/>
</dbReference>
<dbReference type="Pfam" id="PF19036">
    <property type="entry name" value="Fuz_longin_1"/>
    <property type="match status" value="1"/>
</dbReference>
<dbReference type="Pfam" id="PF19037">
    <property type="entry name" value="Fuz_longin_2"/>
    <property type="match status" value="1"/>
</dbReference>
<dbReference type="Pfam" id="PF19038">
    <property type="entry name" value="Fuz_longin_3"/>
    <property type="match status" value="1"/>
</dbReference>
<dbReference type="PRINTS" id="PR01546">
    <property type="entry name" value="YEAST73DUF"/>
</dbReference>
<feature type="chain" id="PRO_0000459504" description="Vacuolar fusion protein MON1 homolog">
    <location>
        <begin position="1"/>
        <end position="528"/>
    </location>
</feature>
<feature type="region of interest" description="Disordered" evidence="2">
    <location>
        <begin position="1"/>
        <end position="50"/>
    </location>
</feature>
<feature type="compositionally biased region" description="Polar residues" evidence="2">
    <location>
        <begin position="1"/>
        <end position="16"/>
    </location>
</feature>
<feature type="mutagenesis site" description="Disruption of autoinhibition resulting in increased Rab5-dependent GEF activity." evidence="9">
    <original>II</original>
    <variation>AA</variation>
    <location>
        <begin position="47"/>
        <end position="48"/>
    </location>
</feature>
<feature type="mutagenesis site" description="Reduced Rab5-dependent Mon1-Ccz1 complex GEF activity towards Rab7 on membranes but not in solution, possibly due to disruption of interaction with Rab5." evidence="9">
    <original>W</original>
    <variation>A</variation>
    <location>
        <position position="334"/>
    </location>
</feature>
<feature type="helix" evidence="17">
    <location>
        <begin position="106"/>
        <end position="108"/>
    </location>
</feature>
<feature type="helix" evidence="17">
    <location>
        <begin position="110"/>
        <end position="113"/>
    </location>
</feature>
<feature type="strand" evidence="17">
    <location>
        <begin position="116"/>
        <end position="123"/>
    </location>
</feature>
<feature type="strand" evidence="17">
    <location>
        <begin position="128"/>
        <end position="134"/>
    </location>
</feature>
<feature type="strand" evidence="17">
    <location>
        <begin position="136"/>
        <end position="138"/>
    </location>
</feature>
<feature type="helix" evidence="17">
    <location>
        <begin position="141"/>
        <end position="154"/>
    </location>
</feature>
<feature type="turn" evidence="17">
    <location>
        <begin position="155"/>
        <end position="157"/>
    </location>
</feature>
<feature type="strand" evidence="17">
    <location>
        <begin position="160"/>
        <end position="164"/>
    </location>
</feature>
<feature type="strand" evidence="17">
    <location>
        <begin position="169"/>
        <end position="174"/>
    </location>
</feature>
<feature type="strand" evidence="17">
    <location>
        <begin position="176"/>
        <end position="184"/>
    </location>
</feature>
<feature type="helix" evidence="17">
    <location>
        <begin position="190"/>
        <end position="207"/>
    </location>
</feature>
<feature type="helix" evidence="17">
    <location>
        <begin position="210"/>
        <end position="219"/>
    </location>
</feature>
<feature type="strand" evidence="17">
    <location>
        <begin position="220"/>
        <end position="222"/>
    </location>
</feature>
<feature type="turn" evidence="17">
    <location>
        <begin position="226"/>
        <end position="229"/>
    </location>
</feature>
<feature type="helix" evidence="17">
    <location>
        <begin position="233"/>
        <end position="239"/>
    </location>
</feature>
<feature type="helix" evidence="17">
    <location>
        <begin position="253"/>
        <end position="258"/>
    </location>
</feature>
<feature type="strand" evidence="17">
    <location>
        <begin position="261"/>
        <end position="263"/>
    </location>
</feature>
<feature type="helix" evidence="17">
    <location>
        <begin position="268"/>
        <end position="281"/>
    </location>
</feature>
<feature type="strand" evidence="17">
    <location>
        <begin position="286"/>
        <end position="297"/>
    </location>
</feature>
<feature type="strand" evidence="17">
    <location>
        <begin position="299"/>
        <end position="304"/>
    </location>
</feature>
<feature type="helix" evidence="17">
    <location>
        <begin position="312"/>
        <end position="324"/>
    </location>
</feature>
<feature type="helix" evidence="17">
    <location>
        <begin position="327"/>
        <end position="329"/>
    </location>
</feature>
<feature type="strand" evidence="17">
    <location>
        <begin position="333"/>
        <end position="337"/>
    </location>
</feature>
<feature type="turn" evidence="17">
    <location>
        <begin position="340"/>
        <end position="342"/>
    </location>
</feature>
<feature type="strand" evidence="17">
    <location>
        <begin position="344"/>
        <end position="346"/>
    </location>
</feature>
<feature type="strand" evidence="17">
    <location>
        <begin position="348"/>
        <end position="355"/>
    </location>
</feature>
<feature type="strand" evidence="17">
    <location>
        <begin position="357"/>
        <end position="359"/>
    </location>
</feature>
<feature type="strand" evidence="17">
    <location>
        <begin position="362"/>
        <end position="368"/>
    </location>
</feature>
<feature type="helix" evidence="17">
    <location>
        <begin position="373"/>
        <end position="389"/>
    </location>
</feature>
<feature type="helix" evidence="17">
    <location>
        <begin position="393"/>
        <end position="401"/>
    </location>
</feature>
<feature type="strand" evidence="17">
    <location>
        <begin position="402"/>
        <end position="404"/>
    </location>
</feature>
<feature type="helix" evidence="17">
    <location>
        <begin position="407"/>
        <end position="413"/>
    </location>
</feature>
<feature type="strand" evidence="17">
    <location>
        <begin position="418"/>
        <end position="423"/>
    </location>
</feature>
<feature type="strand" evidence="17">
    <location>
        <begin position="426"/>
        <end position="428"/>
    </location>
</feature>
<feature type="strand" evidence="17">
    <location>
        <begin position="430"/>
        <end position="432"/>
    </location>
</feature>
<feature type="helix" evidence="17">
    <location>
        <begin position="438"/>
        <end position="440"/>
    </location>
</feature>
<feature type="helix" evidence="17">
    <location>
        <begin position="443"/>
        <end position="461"/>
    </location>
</feature>
<feature type="strand" evidence="17">
    <location>
        <begin position="463"/>
        <end position="465"/>
    </location>
</feature>
<feature type="strand" evidence="17">
    <location>
        <begin position="467"/>
        <end position="473"/>
    </location>
</feature>
<feature type="strand" evidence="17">
    <location>
        <begin position="478"/>
        <end position="483"/>
    </location>
</feature>
<feature type="strand" evidence="17">
    <location>
        <begin position="488"/>
        <end position="493"/>
    </location>
</feature>
<feature type="helix" evidence="17">
    <location>
        <begin position="499"/>
        <end position="520"/>
    </location>
</feature>
<proteinExistence type="evidence at protein level"/>
<gene>
    <name evidence="14" type="primary">Mon1</name>
    <name evidence="14" type="ORF">CG11926</name>
</gene>
<organism evidence="15">
    <name type="scientific">Drosophila melanogaster</name>
    <name type="common">Fruit fly</name>
    <dbReference type="NCBI Taxonomy" id="7227"/>
    <lineage>
        <taxon>Eukaryota</taxon>
        <taxon>Metazoa</taxon>
        <taxon>Ecdysozoa</taxon>
        <taxon>Arthropoda</taxon>
        <taxon>Hexapoda</taxon>
        <taxon>Insecta</taxon>
        <taxon>Pterygota</taxon>
        <taxon>Neoptera</taxon>
        <taxon>Endopterygota</taxon>
        <taxon>Diptera</taxon>
        <taxon>Brachycera</taxon>
        <taxon>Muscomorpha</taxon>
        <taxon>Ephydroidea</taxon>
        <taxon>Drosophilidae</taxon>
        <taxon>Drosophila</taxon>
        <taxon>Sophophora</taxon>
    </lineage>
</organism>
<keyword id="KW-0002">3D-structure</keyword>
<keyword id="KW-0963">Cytoplasm</keyword>
<keyword id="KW-0344">Guanine-nucleotide releasing factor</keyword>
<keyword id="KW-0446">Lipid-binding</keyword>
<keyword id="KW-1185">Reference proteome</keyword>
<keyword id="KW-0813">Transport</keyword>
<evidence type="ECO:0000255" key="1">
    <source>
        <dbReference type="RuleBase" id="RU367048"/>
    </source>
</evidence>
<evidence type="ECO:0000256" key="2">
    <source>
        <dbReference type="SAM" id="MobiDB-lite"/>
    </source>
</evidence>
<evidence type="ECO:0000269" key="3">
    <source>
    </source>
</evidence>
<evidence type="ECO:0000269" key="4">
    <source>
    </source>
</evidence>
<evidence type="ECO:0000269" key="5">
    <source>
    </source>
</evidence>
<evidence type="ECO:0000269" key="6">
    <source>
    </source>
</evidence>
<evidence type="ECO:0000269" key="7">
    <source>
    </source>
</evidence>
<evidence type="ECO:0000269" key="8">
    <source>
    </source>
</evidence>
<evidence type="ECO:0000269" key="9">
    <source>
    </source>
</evidence>
<evidence type="ECO:0000303" key="10">
    <source>
    </source>
</evidence>
<evidence type="ECO:0000305" key="11"/>
<evidence type="ECO:0000305" key="12">
    <source>
    </source>
</evidence>
<evidence type="ECO:0000312" key="13">
    <source>
        <dbReference type="EMBL" id="AGV77144.1"/>
    </source>
</evidence>
<evidence type="ECO:0000312" key="14">
    <source>
        <dbReference type="FlyBase" id="FBgn0031640"/>
    </source>
</evidence>
<evidence type="ECO:0000312" key="15">
    <source>
        <dbReference type="Proteomes" id="UP000000803"/>
    </source>
</evidence>
<evidence type="ECO:0007744" key="16">
    <source>
        <dbReference type="PDB" id="8C7G"/>
    </source>
</evidence>
<evidence type="ECO:0007829" key="17">
    <source>
        <dbReference type="PDB" id="8C7G"/>
    </source>
</evidence>
<name>MON1_DROME</name>
<reference evidence="15" key="1">
    <citation type="journal article" date="2000" name="Science">
        <title>The genome sequence of Drosophila melanogaster.</title>
        <authorList>
            <person name="Adams M.D."/>
            <person name="Celniker S.E."/>
            <person name="Holt R.A."/>
            <person name="Evans C.A."/>
            <person name="Gocayne J.D."/>
            <person name="Amanatides P.G."/>
            <person name="Scherer S.E."/>
            <person name="Li P.W."/>
            <person name="Hoskins R.A."/>
            <person name="Galle R.F."/>
            <person name="George R.A."/>
            <person name="Lewis S.E."/>
            <person name="Richards S."/>
            <person name="Ashburner M."/>
            <person name="Henderson S.N."/>
            <person name="Sutton G.G."/>
            <person name="Wortman J.R."/>
            <person name="Yandell M.D."/>
            <person name="Zhang Q."/>
            <person name="Chen L.X."/>
            <person name="Brandon R.C."/>
            <person name="Rogers Y.-H.C."/>
            <person name="Blazej R.G."/>
            <person name="Champe M."/>
            <person name="Pfeiffer B.D."/>
            <person name="Wan K.H."/>
            <person name="Doyle C."/>
            <person name="Baxter E.G."/>
            <person name="Helt G."/>
            <person name="Nelson C.R."/>
            <person name="Miklos G.L.G."/>
            <person name="Abril J.F."/>
            <person name="Agbayani A."/>
            <person name="An H.-J."/>
            <person name="Andrews-Pfannkoch C."/>
            <person name="Baldwin D."/>
            <person name="Ballew R.M."/>
            <person name="Basu A."/>
            <person name="Baxendale J."/>
            <person name="Bayraktaroglu L."/>
            <person name="Beasley E.M."/>
            <person name="Beeson K.Y."/>
            <person name="Benos P.V."/>
            <person name="Berman B.P."/>
            <person name="Bhandari D."/>
            <person name="Bolshakov S."/>
            <person name="Borkova D."/>
            <person name="Botchan M.R."/>
            <person name="Bouck J."/>
            <person name="Brokstein P."/>
            <person name="Brottier P."/>
            <person name="Burtis K.C."/>
            <person name="Busam D.A."/>
            <person name="Butler H."/>
            <person name="Cadieu E."/>
            <person name="Center A."/>
            <person name="Chandra I."/>
            <person name="Cherry J.M."/>
            <person name="Cawley S."/>
            <person name="Dahlke C."/>
            <person name="Davenport L.B."/>
            <person name="Davies P."/>
            <person name="de Pablos B."/>
            <person name="Delcher A."/>
            <person name="Deng Z."/>
            <person name="Mays A.D."/>
            <person name="Dew I."/>
            <person name="Dietz S.M."/>
            <person name="Dodson K."/>
            <person name="Doup L.E."/>
            <person name="Downes M."/>
            <person name="Dugan-Rocha S."/>
            <person name="Dunkov B.C."/>
            <person name="Dunn P."/>
            <person name="Durbin K.J."/>
            <person name="Evangelista C.C."/>
            <person name="Ferraz C."/>
            <person name="Ferriera S."/>
            <person name="Fleischmann W."/>
            <person name="Fosler C."/>
            <person name="Gabrielian A.E."/>
            <person name="Garg N.S."/>
            <person name="Gelbart W.M."/>
            <person name="Glasser K."/>
            <person name="Glodek A."/>
            <person name="Gong F."/>
            <person name="Gorrell J.H."/>
            <person name="Gu Z."/>
            <person name="Guan P."/>
            <person name="Harris M."/>
            <person name="Harris N.L."/>
            <person name="Harvey D.A."/>
            <person name="Heiman T.J."/>
            <person name="Hernandez J.R."/>
            <person name="Houck J."/>
            <person name="Hostin D."/>
            <person name="Houston K.A."/>
            <person name="Howland T.J."/>
            <person name="Wei M.-H."/>
            <person name="Ibegwam C."/>
            <person name="Jalali M."/>
            <person name="Kalush F."/>
            <person name="Karpen G.H."/>
            <person name="Ke Z."/>
            <person name="Kennison J.A."/>
            <person name="Ketchum K.A."/>
            <person name="Kimmel B.E."/>
            <person name="Kodira C.D."/>
            <person name="Kraft C.L."/>
            <person name="Kravitz S."/>
            <person name="Kulp D."/>
            <person name="Lai Z."/>
            <person name="Lasko P."/>
            <person name="Lei Y."/>
            <person name="Levitsky A.A."/>
            <person name="Li J.H."/>
            <person name="Li Z."/>
            <person name="Liang Y."/>
            <person name="Lin X."/>
            <person name="Liu X."/>
            <person name="Mattei B."/>
            <person name="McIntosh T.C."/>
            <person name="McLeod M.P."/>
            <person name="McPherson D."/>
            <person name="Merkulov G."/>
            <person name="Milshina N.V."/>
            <person name="Mobarry C."/>
            <person name="Morris J."/>
            <person name="Moshrefi A."/>
            <person name="Mount S.M."/>
            <person name="Moy M."/>
            <person name="Murphy B."/>
            <person name="Murphy L."/>
            <person name="Muzny D.M."/>
            <person name="Nelson D.L."/>
            <person name="Nelson D.R."/>
            <person name="Nelson K.A."/>
            <person name="Nixon K."/>
            <person name="Nusskern D.R."/>
            <person name="Pacleb J.M."/>
            <person name="Palazzolo M."/>
            <person name="Pittman G.S."/>
            <person name="Pan S."/>
            <person name="Pollard J."/>
            <person name="Puri V."/>
            <person name="Reese M.G."/>
            <person name="Reinert K."/>
            <person name="Remington K."/>
            <person name="Saunders R.D.C."/>
            <person name="Scheeler F."/>
            <person name="Shen H."/>
            <person name="Shue B.C."/>
            <person name="Siden-Kiamos I."/>
            <person name="Simpson M."/>
            <person name="Skupski M.P."/>
            <person name="Smith T.J."/>
            <person name="Spier E."/>
            <person name="Spradling A.C."/>
            <person name="Stapleton M."/>
            <person name="Strong R."/>
            <person name="Sun E."/>
            <person name="Svirskas R."/>
            <person name="Tector C."/>
            <person name="Turner R."/>
            <person name="Venter E."/>
            <person name="Wang A.H."/>
            <person name="Wang X."/>
            <person name="Wang Z.-Y."/>
            <person name="Wassarman D.A."/>
            <person name="Weinstock G.M."/>
            <person name="Weissenbach J."/>
            <person name="Williams S.M."/>
            <person name="Woodage T."/>
            <person name="Worley K.C."/>
            <person name="Wu D."/>
            <person name="Yang S."/>
            <person name="Yao Q.A."/>
            <person name="Ye J."/>
            <person name="Yeh R.-F."/>
            <person name="Zaveri J.S."/>
            <person name="Zhan M."/>
            <person name="Zhang G."/>
            <person name="Zhao Q."/>
            <person name="Zheng L."/>
            <person name="Zheng X.H."/>
            <person name="Zhong F.N."/>
            <person name="Zhong W."/>
            <person name="Zhou X."/>
            <person name="Zhu S.C."/>
            <person name="Zhu X."/>
            <person name="Smith H.O."/>
            <person name="Gibbs R.A."/>
            <person name="Myers E.W."/>
            <person name="Rubin G.M."/>
            <person name="Venter J.C."/>
        </authorList>
    </citation>
    <scope>NUCLEOTIDE SEQUENCE [LARGE SCALE GENOMIC DNA]</scope>
    <source>
        <strain evidence="15">Berkeley</strain>
    </source>
</reference>
<reference evidence="15" key="2">
    <citation type="journal article" date="2002" name="Genome Biol.">
        <title>Annotation of the Drosophila melanogaster euchromatic genome: a systematic review.</title>
        <authorList>
            <person name="Misra S."/>
            <person name="Crosby M.A."/>
            <person name="Mungall C.J."/>
            <person name="Matthews B.B."/>
            <person name="Campbell K.S."/>
            <person name="Hradecky P."/>
            <person name="Huang Y."/>
            <person name="Kaminker J.S."/>
            <person name="Millburn G.H."/>
            <person name="Prochnik S.E."/>
            <person name="Smith C.D."/>
            <person name="Tupy J.L."/>
            <person name="Whitfield E.J."/>
            <person name="Bayraktaroglu L."/>
            <person name="Berman B.P."/>
            <person name="Bettencourt B.R."/>
            <person name="Celniker S.E."/>
            <person name="de Grey A.D.N.J."/>
            <person name="Drysdale R.A."/>
            <person name="Harris N.L."/>
            <person name="Richter J."/>
            <person name="Russo S."/>
            <person name="Schroeder A.J."/>
            <person name="Shu S.Q."/>
            <person name="Stapleton M."/>
            <person name="Yamada C."/>
            <person name="Ashburner M."/>
            <person name="Gelbart W.M."/>
            <person name="Rubin G.M."/>
            <person name="Lewis S.E."/>
        </authorList>
    </citation>
    <scope>GENOME REANNOTATION</scope>
    <source>
        <strain evidence="15">Berkeley</strain>
    </source>
</reference>
<reference evidence="13" key="3">
    <citation type="submission" date="2013-09" db="EMBL/GenBank/DDBJ databases">
        <authorList>
            <person name="Carlson J."/>
            <person name="Booth B."/>
            <person name="Frise E."/>
            <person name="Park S."/>
            <person name="Wan K."/>
            <person name="Yu C."/>
            <person name="Celniker S."/>
        </authorList>
    </citation>
    <scope>NUCLEOTIDE SEQUENCE [LARGE SCALE MRNA]</scope>
</reference>
<reference evidence="11" key="4">
    <citation type="journal article" date="2013" name="J. Cell Sci.">
        <title>Dmon1 controls recruitment of Rab7 to maturing endosomes in Drosophila.</title>
        <authorList>
            <person name="Yousefian J."/>
            <person name="Troost T."/>
            <person name="Grawe F."/>
            <person name="Sasamura T."/>
            <person name="Fortini M."/>
            <person name="Klein T."/>
        </authorList>
    </citation>
    <scope>FUNCTION</scope>
    <scope>SUBCELLULAR LOCATION</scope>
</reference>
<reference evidence="11" key="5">
    <citation type="journal article" date="2016" name="Mol. Biol. Cell">
        <title>The Ccz1-Mon1-Rab7 module and Rab5 control distinct steps of autophagy.</title>
        <authorList>
            <person name="Hegedus K."/>
            <person name="Takats S."/>
            <person name="Boda A."/>
            <person name="Jipa A."/>
            <person name="Nagy P."/>
            <person name="Varga K."/>
            <person name="Kovacs A.L."/>
            <person name="Juhasz G."/>
        </authorList>
    </citation>
    <scope>FUNCTION</scope>
    <scope>SUBUNIT</scope>
    <scope>DISRUPTION PHENOTYPE</scope>
</reference>
<reference evidence="11" key="6">
    <citation type="journal article" date="2020" name="Elife">
        <title>A conserved and regulated mechanism drives endosomal Rab transition.</title>
        <authorList>
            <person name="Langemeyer L."/>
            <person name="Borchers A.C."/>
            <person name="Herrmann E."/>
            <person name="Fuellbrunn N."/>
            <person name="Han Y."/>
            <person name="Perz A."/>
            <person name="Auffarth K."/>
            <person name="Kuemmel D."/>
            <person name="Ungermann C."/>
        </authorList>
    </citation>
    <scope>FUNCTION</scope>
    <scope>ACTIVITY REGULATION</scope>
</reference>
<reference evidence="11" key="7">
    <citation type="journal article" date="2020" name="J. Cell Sci.">
        <title>A trimeric metazoan Rab7 GEF complex is crucial for endocytosis and scavenger function.</title>
        <authorList>
            <person name="Dehnen L."/>
            <person name="Janz M."/>
            <person name="Verma J.K."/>
            <person name="Psathaki O.E."/>
            <person name="Langemeyer L."/>
            <person name="Froehlich F."/>
            <person name="Heinisch J.J."/>
            <person name="Meyer H."/>
            <person name="Ungermann C."/>
            <person name="Paululat A."/>
        </authorList>
    </citation>
    <scope>IDENTIFICATION IN THE MON1-CCZ1 GUANYL-NUCLEOTIDE EXCHANGE FACTOR COMPLEX</scope>
    <scope>INTERACTION WITH BULLI AND CCZ1</scope>
</reference>
<reference evidence="11" key="8">
    <citation type="journal article" date="2020" name="Int. J. Dev. Biol.">
        <title>Drosophila Mon1 and Rab7 interact to regulate glutamate receptor levels at the neuromuscular junction.</title>
        <authorList>
            <person name="Basargekar A."/>
            <person name="Yogi S."/>
            <person name="Mushtaq Z."/>
            <person name="Deivasigamani S."/>
            <person name="Kumar V."/>
            <person name="Ratnaparkhi G.S."/>
            <person name="Ratnaparkhi A."/>
        </authorList>
    </citation>
    <scope>FUNCTION</scope>
</reference>
<reference evidence="11" key="9">
    <citation type="journal article" date="2023" name="Proc. Natl. Acad. Sci. U.S.A.">
        <title>Regulatory sites in the Mon1-Ccz1 complex control Rab5 to Rab7 transition and endosome maturation.</title>
        <authorList>
            <person name="Borchers A.C."/>
            <person name="Janz M."/>
            <person name="Schaefer J.H."/>
            <person name="Moeller A."/>
            <person name="Kuemmel D."/>
            <person name="Paululat A."/>
            <person name="Ungermann C."/>
            <person name="Langemeyer L."/>
        </authorList>
    </citation>
    <scope>FUNCTION</scope>
    <scope>ACTIVITY REGULATION</scope>
    <scope>SUBUNIT</scope>
    <scope>DOMAIN</scope>
    <scope>MUTAGENESIS OF 47-ILE-ILE-48 AND TRP-334</scope>
</reference>
<reference evidence="16" key="10">
    <citation type="journal article" date="2023" name="Proc. Natl. Acad. Sci. U.S.A.">
        <title>Structure of the metazoan Rab7 GEF complex Mon1-Ccz1-Bulli.</title>
        <authorList>
            <person name="Herrmann E."/>
            <person name="Schaefer J.H."/>
            <person name="Wilmes S."/>
            <person name="Ungermann C."/>
            <person name="Moeller A."/>
            <person name="Kuemmel D."/>
        </authorList>
    </citation>
    <scope>STRUCTURE BY ELECTRON MICROSCOPY (3.2 ANGSTROMS) OF 101-528</scope>
    <scope>SUBUNIT</scope>
</reference>
<sequence>MEVEQTSVRSDTNSTCEYLDAEGDPESPNLYQEADPDQEAEQQNHSIISELRDGLGTMRDNSALSPEPGQENKGLAASVESLALSTSTSAKTEDSIGGGLEEEYDYQHDSLWQGQKKHIFILSEAGKPIFSLHGNEDKLATLFGVIQALVSFVQMGQDAITSIHAGGIKFAFMQRSSLILVAASRSNMSVQQLQLQLGDVYNQILSILTYSHMTKIFERRKNFDLRRLLSGSERLFYNLLANDSSSAKVSNNIFTFLTNSIRVFPLPTTIRSQITSAIQSNCSKIKNLVFAVLIANNKLIALVRMKKYSIHPADLRLIFNLVECSESFKSSENWSPICLPKFDMNGYLHAHVSYLADDCQACLLLLSVDRDAFFTLAEAKAKITEKLRKSHCLEAINEELQQPFNAKLYQQVVGIPELRHFLYKPKSTAQLLCPMLRHPYKSLTELERLEAIYCDLLHRIHNSSRPLKLIYEMKEREVVLAWATGTYELYAIFEPVVDKATVIKYVDKLIKWIEKEYDVYFIRNHATF</sequence>
<accession>Q9VR38</accession>
<comment type="function">
    <text evidence="1 3 4 5 7 9 12">Part of the Mon1-Ccz1 guanyl-nucleotide exchange factor complex specific for Rab7 that promotes the exchange of GDP to GTP, converting Rab7 from an inactive GDP-bound form into an active GTP-bound form (Probable). Plays an important role in membrane trafficking through the secretory apparatus (By similarity). Required for recruitment of Rab7 to endosomal and autophagosomal membranes to mediate endolysosomal and autolysosomal vesicle maturation (PubMed:23418349, PubMed:27559127, PubMed:37463208). Required for fusion of multivesicular bodies and lysosomes but not their formation or trafficking (PubMed:23418349). Involved in the replacement of Rab5 (and possibly Rab4) with Rab7, also known as Rab conversion or the Rab cascade, during endosomal maturation (PubMed:23418349). The Mon1-Ccz1 complex is recruited to phosphatidylinositol 3-phosphate (PtdIns[3]P) enriched membranes by Rab5, which stimulates recruitment and guanyl-nucleotide exchange of Rab7 (PubMed:32391792). Together with Rab7 required for autolysosome formation in fat cells and autophagic degradation during starvation-induced basal and developmental autophagy (PubMed:27559127). Involved in neuromuscular junction (NMJ) presynaptic bouton function and morphogenesis (PubMed:32658990). Together with Rab7, regulates levels of postsynaptic glutamate receptor GluRIIA in the NMJ presynapse (PubMed:32658990).</text>
</comment>
<comment type="activity regulation">
    <text evidence="5 9">The Rab7 guanyl-nucleotide exchange factor (GEF) activity of the Mon1-Ccz1 complex is autoinhibited by the N-terminal disordered region of Mon1 (PubMed:37463208). GEF activity is stimulated by Rab5-mediated recruitment to membranes (PubMed:32391792).</text>
</comment>
<comment type="subunit">
    <text evidence="4 6 8 9">Component of the Mon1-Ccz1 guanyl-nucleotide exchange factor complex made up of Mon1, Ccz1 and Bulli; the interaction of Bulli with the Mon1-Ccz1 heterodimer is mediated via the C-terminal Mic1 domain of Bulli (PubMed:27559127, PubMed:32499409, PubMed:37155863, PubMed:37463208). Mon1 and Ccz1 form a stable complex which displays Rab7 GEF activity with or without Bulli; GEF activity is enhanced by Bulli possibly by improving membrane association of the complex (PubMed:32499409, PubMed:37155863). Interacts with Rab5 and Rab7; preferentially binds GTP-bound Rab5 and GDP-bound Rab7 (PubMed:27559127).</text>
</comment>
<comment type="subcellular location">
    <subcellularLocation>
        <location evidence="3">Cytoplasm</location>
        <location evidence="3">Cytosol</location>
    </subcellularLocation>
    <text evidence="4 12">There is no evidence of association with endosomal membranes, however this association may be transient (Probable). Binds phospholipids with a preference for phosphatidylinositol monophosphates, including phosphatidylinositol 3-phosphate (PtdIns[3]P) that is enriched in early endosomal and autophagosomal membranes (PubMed:27559127).</text>
</comment>
<comment type="domain">
    <text evidence="9">The disordered N-terminal is involved in autoinhibition of the Mon1-Ccz1 complex guanyl-nucleotide exchange factor activity.</text>
</comment>
<comment type="disruption phenotype">
    <text evidence="4">Accumulation of autophagosomes and reduced number of autolysosomes in fat cells caused by disruption of Rab7 recruitment to autophagosomes leading to a defect in autophagosome-autolysosome fusion (PubMed:27559127). Impaired lysosomal degradation of endocytosed Notch and Boss receptors in the developing eye (PubMed:27559127).</text>
</comment>
<comment type="similarity">
    <text evidence="1">Belongs to the MON1/SAND family.</text>
</comment>
<protein>
    <recommendedName>
        <fullName evidence="1">Vacuolar fusion protein MON1 homolog</fullName>
        <shortName evidence="10">Dmon1</shortName>
    </recommendedName>
</protein>